<dbReference type="EC" id="1.7.1.13" evidence="1"/>
<dbReference type="EMBL" id="AP008934">
    <property type="protein sequence ID" value="BAE19134.1"/>
    <property type="molecule type" value="Genomic_DNA"/>
</dbReference>
<dbReference type="RefSeq" id="WP_002483932.1">
    <property type="nucleotide sequence ID" value="NZ_MTGA01000039.1"/>
</dbReference>
<dbReference type="SMR" id="Q49VS6"/>
<dbReference type="GeneID" id="66868150"/>
<dbReference type="KEGG" id="ssp:SSP1989"/>
<dbReference type="eggNOG" id="COG0780">
    <property type="taxonomic scope" value="Bacteria"/>
</dbReference>
<dbReference type="HOGENOM" id="CLU_102489_0_1_9"/>
<dbReference type="OrthoDB" id="9795077at2"/>
<dbReference type="UniPathway" id="UPA00392"/>
<dbReference type="Proteomes" id="UP000006371">
    <property type="component" value="Chromosome"/>
</dbReference>
<dbReference type="GO" id="GO:0005737">
    <property type="term" value="C:cytoplasm"/>
    <property type="evidence" value="ECO:0007669"/>
    <property type="project" value="UniProtKB-SubCell"/>
</dbReference>
<dbReference type="GO" id="GO:0033739">
    <property type="term" value="F:preQ1 synthase activity"/>
    <property type="evidence" value="ECO:0007669"/>
    <property type="project" value="UniProtKB-UniRule"/>
</dbReference>
<dbReference type="GO" id="GO:0008616">
    <property type="term" value="P:queuosine biosynthetic process"/>
    <property type="evidence" value="ECO:0007669"/>
    <property type="project" value="UniProtKB-UniRule"/>
</dbReference>
<dbReference type="GO" id="GO:0006400">
    <property type="term" value="P:tRNA modification"/>
    <property type="evidence" value="ECO:0007669"/>
    <property type="project" value="UniProtKB-UniRule"/>
</dbReference>
<dbReference type="Gene3D" id="3.30.1130.10">
    <property type="match status" value="1"/>
</dbReference>
<dbReference type="HAMAP" id="MF_00818">
    <property type="entry name" value="QueF_type1"/>
    <property type="match status" value="1"/>
</dbReference>
<dbReference type="InterPro" id="IPR043133">
    <property type="entry name" value="GTP-CH-I_C/QueF"/>
</dbReference>
<dbReference type="InterPro" id="IPR050084">
    <property type="entry name" value="NADPH_dep_7-cyano-7-deazaG_red"/>
</dbReference>
<dbReference type="InterPro" id="IPR029500">
    <property type="entry name" value="QueF"/>
</dbReference>
<dbReference type="InterPro" id="IPR016856">
    <property type="entry name" value="QueF_type1"/>
</dbReference>
<dbReference type="NCBIfam" id="TIGR03139">
    <property type="entry name" value="QueF-II"/>
    <property type="match status" value="1"/>
</dbReference>
<dbReference type="PANTHER" id="PTHR34354">
    <property type="entry name" value="NADPH-DEPENDENT 7-CYANO-7-DEAZAGUANINE REDUCTASE"/>
    <property type="match status" value="1"/>
</dbReference>
<dbReference type="PANTHER" id="PTHR34354:SF1">
    <property type="entry name" value="NADPH-DEPENDENT 7-CYANO-7-DEAZAGUANINE REDUCTASE"/>
    <property type="match status" value="1"/>
</dbReference>
<dbReference type="Pfam" id="PF14489">
    <property type="entry name" value="QueF"/>
    <property type="match status" value="1"/>
</dbReference>
<dbReference type="PIRSF" id="PIRSF027377">
    <property type="entry name" value="Nitrile_oxidored_QueF"/>
    <property type="match status" value="1"/>
</dbReference>
<dbReference type="SUPFAM" id="SSF55620">
    <property type="entry name" value="Tetrahydrobiopterin biosynthesis enzymes-like"/>
    <property type="match status" value="1"/>
</dbReference>
<proteinExistence type="inferred from homology"/>
<reference key="1">
    <citation type="journal article" date="2005" name="Proc. Natl. Acad. Sci. U.S.A.">
        <title>Whole genome sequence of Staphylococcus saprophyticus reveals the pathogenesis of uncomplicated urinary tract infection.</title>
        <authorList>
            <person name="Kuroda M."/>
            <person name="Yamashita A."/>
            <person name="Hirakawa H."/>
            <person name="Kumano M."/>
            <person name="Morikawa K."/>
            <person name="Higashide M."/>
            <person name="Maruyama A."/>
            <person name="Inose Y."/>
            <person name="Matoba K."/>
            <person name="Toh H."/>
            <person name="Kuhara S."/>
            <person name="Hattori M."/>
            <person name="Ohta T."/>
        </authorList>
    </citation>
    <scope>NUCLEOTIDE SEQUENCE [LARGE SCALE GENOMIC DNA]</scope>
    <source>
        <strain>ATCC 15305 / DSM 20229 / NCIMB 8711 / NCTC 7292 / S-41</strain>
    </source>
</reference>
<gene>
    <name evidence="1" type="primary">queF</name>
    <name type="ordered locus">SSP1989</name>
</gene>
<feature type="chain" id="PRO_0000163003" description="NADPH-dependent 7-cyano-7-deazaguanine reductase">
    <location>
        <begin position="1"/>
        <end position="166"/>
    </location>
</feature>
<feature type="active site" description="Thioimide intermediate" evidence="1">
    <location>
        <position position="57"/>
    </location>
</feature>
<feature type="active site" description="Proton donor" evidence="1">
    <location>
        <position position="64"/>
    </location>
</feature>
<feature type="binding site" evidence="1">
    <location>
        <begin position="79"/>
        <end position="81"/>
    </location>
    <ligand>
        <name>substrate</name>
    </ligand>
</feature>
<feature type="binding site" evidence="1">
    <location>
        <begin position="98"/>
        <end position="99"/>
    </location>
    <ligand>
        <name>substrate</name>
    </ligand>
</feature>
<comment type="function">
    <text evidence="1">Catalyzes the NADPH-dependent reduction of 7-cyano-7-deazaguanine (preQ0) to 7-aminomethyl-7-deazaguanine (preQ1).</text>
</comment>
<comment type="catalytic activity">
    <reaction evidence="1">
        <text>7-aminomethyl-7-carbaguanine + 2 NADP(+) = 7-cyano-7-deazaguanine + 2 NADPH + 3 H(+)</text>
        <dbReference type="Rhea" id="RHEA:13409"/>
        <dbReference type="ChEBI" id="CHEBI:15378"/>
        <dbReference type="ChEBI" id="CHEBI:45075"/>
        <dbReference type="ChEBI" id="CHEBI:57783"/>
        <dbReference type="ChEBI" id="CHEBI:58349"/>
        <dbReference type="ChEBI" id="CHEBI:58703"/>
        <dbReference type="EC" id="1.7.1.13"/>
    </reaction>
</comment>
<comment type="pathway">
    <text evidence="1">tRNA modification; tRNA-queuosine biosynthesis.</text>
</comment>
<comment type="subcellular location">
    <subcellularLocation>
        <location evidence="1">Cytoplasm</location>
    </subcellularLocation>
</comment>
<comment type="similarity">
    <text evidence="1">Belongs to the GTP cyclohydrolase I family. QueF type 1 subfamily.</text>
</comment>
<name>QUEF_STAS1</name>
<sequence length="166" mass="19710">MTEGRNKEELEDITLLGNQNNKYDFDYRPDVLESFDNKHQGRDYFVKFNCPEFTSLCPITGQPDFATIYISYIPNIKMVESKSLKLYLFSFRNHGDFHEDCMNIIMNDLIELMDPHYIEVWGKFTPRGGISIDPYTNYGRPDSKYEKMAEHRLMNHDLYPEKIDNR</sequence>
<protein>
    <recommendedName>
        <fullName evidence="1">NADPH-dependent 7-cyano-7-deazaguanine reductase</fullName>
        <ecNumber evidence="1">1.7.1.13</ecNumber>
    </recommendedName>
    <alternativeName>
        <fullName evidence="1">7-cyano-7-carbaguanine reductase</fullName>
    </alternativeName>
    <alternativeName>
        <fullName evidence="1">NADPH-dependent nitrile oxidoreductase</fullName>
    </alternativeName>
    <alternativeName>
        <fullName evidence="1">PreQ(0) reductase</fullName>
    </alternativeName>
</protein>
<organism>
    <name type="scientific">Staphylococcus saprophyticus subsp. saprophyticus (strain ATCC 15305 / DSM 20229 / NCIMB 8711 / NCTC 7292 / S-41)</name>
    <dbReference type="NCBI Taxonomy" id="342451"/>
    <lineage>
        <taxon>Bacteria</taxon>
        <taxon>Bacillati</taxon>
        <taxon>Bacillota</taxon>
        <taxon>Bacilli</taxon>
        <taxon>Bacillales</taxon>
        <taxon>Staphylococcaceae</taxon>
        <taxon>Staphylococcus</taxon>
    </lineage>
</organism>
<accession>Q49VS6</accession>
<evidence type="ECO:0000255" key="1">
    <source>
        <dbReference type="HAMAP-Rule" id="MF_00818"/>
    </source>
</evidence>
<keyword id="KW-0963">Cytoplasm</keyword>
<keyword id="KW-0521">NADP</keyword>
<keyword id="KW-0560">Oxidoreductase</keyword>
<keyword id="KW-0671">Queuosine biosynthesis</keyword>
<keyword id="KW-1185">Reference proteome</keyword>